<feature type="chain" id="PRO_1000213703" description="Divalent-cation tolerance protein CutA">
    <location>
        <begin position="1"/>
        <end position="112"/>
    </location>
</feature>
<feature type="binding site" evidence="1">
    <location>
        <position position="16"/>
    </location>
    <ligand>
        <name>Cu cation</name>
        <dbReference type="ChEBI" id="CHEBI:23378"/>
    </ligand>
</feature>
<feature type="binding site" evidence="1">
    <location>
        <position position="83"/>
    </location>
    <ligand>
        <name>Cu cation</name>
        <dbReference type="ChEBI" id="CHEBI:23378"/>
    </ligand>
</feature>
<feature type="binding site" evidence="1">
    <location>
        <position position="84"/>
    </location>
    <ligand>
        <name>Cu cation</name>
        <dbReference type="ChEBI" id="CHEBI:23378"/>
    </ligand>
</feature>
<keyword id="KW-0186">Copper</keyword>
<keyword id="KW-0963">Cytoplasm</keyword>
<keyword id="KW-0479">Metal-binding</keyword>
<sequence length="112" mass="12331">MLDEKSSNTASVVVLCTAPDEATAQDLAAKVLAEKLAACATLIPGATSLYYWEGKLEQEYEVQMILKTTVSHQQALLECLKSHHPYQTPELLVLPVTHGDTDYLSWLNASLR</sequence>
<reference key="1">
    <citation type="journal article" date="2009" name="J. Bacteriol.">
        <title>Genomic sequencing reveals regulatory mutations and recombinational events in the widely used MC4100 lineage of Escherichia coli K-12.</title>
        <authorList>
            <person name="Ferenci T."/>
            <person name="Zhou Z."/>
            <person name="Betteridge T."/>
            <person name="Ren Y."/>
            <person name="Liu Y."/>
            <person name="Feng L."/>
            <person name="Reeves P.R."/>
            <person name="Wang L."/>
        </authorList>
    </citation>
    <scope>NUCLEOTIDE SEQUENCE [LARGE SCALE GENOMIC DNA]</scope>
    <source>
        <strain>K12 / MC4100 / BW2952</strain>
    </source>
</reference>
<comment type="function">
    <text evidence="1">Involved in resistance toward heavy metals.</text>
</comment>
<comment type="cofactor">
    <cofactor evidence="1">
        <name>Cu cation</name>
        <dbReference type="ChEBI" id="CHEBI:23378"/>
    </cofactor>
    <text evidence="1">Binds 1 copper ion per subunit.</text>
</comment>
<comment type="subunit">
    <text evidence="1">Homotrimer.</text>
</comment>
<comment type="subcellular location">
    <subcellularLocation>
        <location evidence="1">Cytoplasm</location>
    </subcellularLocation>
</comment>
<comment type="similarity">
    <text evidence="1">Belongs to the CutA family.</text>
</comment>
<name>CUTA_ECOBW</name>
<protein>
    <recommendedName>
        <fullName evidence="1">Divalent-cation tolerance protein CutA</fullName>
    </recommendedName>
</protein>
<proteinExistence type="inferred from homology"/>
<organism>
    <name type="scientific">Escherichia coli (strain K12 / MC4100 / BW2952)</name>
    <dbReference type="NCBI Taxonomy" id="595496"/>
    <lineage>
        <taxon>Bacteria</taxon>
        <taxon>Pseudomonadati</taxon>
        <taxon>Pseudomonadota</taxon>
        <taxon>Gammaproteobacteria</taxon>
        <taxon>Enterobacterales</taxon>
        <taxon>Enterobacteriaceae</taxon>
        <taxon>Escherichia</taxon>
    </lineage>
</organism>
<accession>C5A1C9</accession>
<dbReference type="EMBL" id="CP001396">
    <property type="protein sequence ID" value="ACR62604.1"/>
    <property type="molecule type" value="Genomic_DNA"/>
</dbReference>
<dbReference type="RefSeq" id="WP_000883400.1">
    <property type="nucleotide sequence ID" value="NC_012759.1"/>
</dbReference>
<dbReference type="SMR" id="C5A1C9"/>
<dbReference type="GeneID" id="93777687"/>
<dbReference type="KEGG" id="ebw:BWG_3850"/>
<dbReference type="HOGENOM" id="CLU_098807_3_0_6"/>
<dbReference type="GO" id="GO:0005737">
    <property type="term" value="C:cytoplasm"/>
    <property type="evidence" value="ECO:0007669"/>
    <property type="project" value="UniProtKB-SubCell"/>
</dbReference>
<dbReference type="GO" id="GO:0005507">
    <property type="term" value="F:copper ion binding"/>
    <property type="evidence" value="ECO:0007669"/>
    <property type="project" value="UniProtKB-UniRule"/>
</dbReference>
<dbReference type="GO" id="GO:0010038">
    <property type="term" value="P:response to metal ion"/>
    <property type="evidence" value="ECO:0007669"/>
    <property type="project" value="InterPro"/>
</dbReference>
<dbReference type="FunFam" id="3.30.70.120:FF:000004">
    <property type="entry name" value="Divalent-cation tolerance protein CutA"/>
    <property type="match status" value="1"/>
</dbReference>
<dbReference type="Gene3D" id="3.30.70.120">
    <property type="match status" value="1"/>
</dbReference>
<dbReference type="HAMAP" id="MF_01160">
    <property type="entry name" value="CutA"/>
    <property type="match status" value="1"/>
</dbReference>
<dbReference type="InterPro" id="IPR023700">
    <property type="entry name" value="CutA_Enterobact"/>
</dbReference>
<dbReference type="InterPro" id="IPR004323">
    <property type="entry name" value="Ion_tolerance_CutA"/>
</dbReference>
<dbReference type="InterPro" id="IPR011322">
    <property type="entry name" value="N-reg_PII-like_a/b"/>
</dbReference>
<dbReference type="InterPro" id="IPR015867">
    <property type="entry name" value="N-reg_PII/ATP_PRibTrfase_C"/>
</dbReference>
<dbReference type="NCBIfam" id="NF007930">
    <property type="entry name" value="PRK10645.1"/>
    <property type="match status" value="1"/>
</dbReference>
<dbReference type="PANTHER" id="PTHR23419">
    <property type="entry name" value="DIVALENT CATION TOLERANCE CUTA-RELATED"/>
    <property type="match status" value="1"/>
</dbReference>
<dbReference type="PANTHER" id="PTHR23419:SF8">
    <property type="entry name" value="FI09726P"/>
    <property type="match status" value="1"/>
</dbReference>
<dbReference type="Pfam" id="PF03091">
    <property type="entry name" value="CutA1"/>
    <property type="match status" value="1"/>
</dbReference>
<dbReference type="SUPFAM" id="SSF54913">
    <property type="entry name" value="GlnB-like"/>
    <property type="match status" value="1"/>
</dbReference>
<evidence type="ECO:0000255" key="1">
    <source>
        <dbReference type="HAMAP-Rule" id="MF_01160"/>
    </source>
</evidence>
<gene>
    <name evidence="1" type="primary">cutA</name>
    <name type="ordered locus">BWG_3850</name>
</gene>